<dbReference type="EMBL" id="X05585">
    <property type="protein sequence ID" value="CAA29085.1"/>
    <property type="molecule type" value="Genomic_DNA"/>
</dbReference>
<dbReference type="EMBL" id="EF125216">
    <property type="protein sequence ID" value="ABN58537.1"/>
    <property type="molecule type" value="Genomic_DNA"/>
</dbReference>
<dbReference type="EMBL" id="EF125217">
    <property type="protein sequence ID" value="ABN58546.1"/>
    <property type="molecule type" value="Genomic_DNA"/>
</dbReference>
<dbReference type="EMBL" id="EF125218">
    <property type="protein sequence ID" value="ABN58555.1"/>
    <property type="molecule type" value="Genomic_DNA"/>
</dbReference>
<dbReference type="EMBL" id="EF125219">
    <property type="protein sequence ID" value="ABN58564.1"/>
    <property type="molecule type" value="Genomic_DNA"/>
</dbReference>
<dbReference type="EMBL" id="EF125220">
    <property type="protein sequence ID" value="ABN58573.1"/>
    <property type="molecule type" value="Genomic_DNA"/>
</dbReference>
<dbReference type="EMBL" id="EF125221">
    <property type="protein sequence ID" value="ABN58582.1"/>
    <property type="molecule type" value="Genomic_DNA"/>
</dbReference>
<dbReference type="EMBL" id="EF125222">
    <property type="protein sequence ID" value="ABN58591.1"/>
    <property type="molecule type" value="Genomic_DNA"/>
</dbReference>
<dbReference type="EMBL" id="EF125223">
    <property type="protein sequence ID" value="ABN58600.1"/>
    <property type="molecule type" value="Genomic_DNA"/>
</dbReference>
<dbReference type="EMBL" id="EF125224">
    <property type="protein sequence ID" value="ABN58609.1"/>
    <property type="molecule type" value="Genomic_DNA"/>
</dbReference>
<dbReference type="EMBL" id="EF125225">
    <property type="protein sequence ID" value="ABN58618.1"/>
    <property type="molecule type" value="Genomic_DNA"/>
</dbReference>
<dbReference type="EMBL" id="EF125226">
    <property type="protein sequence ID" value="ABN58627.1"/>
    <property type="molecule type" value="Genomic_DNA"/>
</dbReference>
<dbReference type="EMBL" id="EF125228">
    <property type="protein sequence ID" value="ABN58645.1"/>
    <property type="molecule type" value="Genomic_DNA"/>
</dbReference>
<dbReference type="EMBL" id="Z69382">
    <property type="protein sequence ID" value="CAA93386.1"/>
    <property type="molecule type" value="Genomic_DNA"/>
</dbReference>
<dbReference type="EMBL" id="Z71397">
    <property type="protein sequence ID" value="CAA96002.1"/>
    <property type="molecule type" value="Genomic_DNA"/>
</dbReference>
<dbReference type="EMBL" id="BK006947">
    <property type="protein sequence ID" value="DAA10428.1"/>
    <property type="molecule type" value="Genomic_DNA"/>
</dbReference>
<dbReference type="PIR" id="S63062">
    <property type="entry name" value="MMBYO"/>
</dbReference>
<dbReference type="RefSeq" id="NP_014278.3">
    <property type="nucleotide sequence ID" value="NM_001182959.3"/>
</dbReference>
<dbReference type="PDB" id="2GW1">
    <property type="method" value="X-ray"/>
    <property type="resolution" value="3.00 A"/>
    <property type="chains" value="A/B=94-607"/>
</dbReference>
<dbReference type="PDBsum" id="2GW1"/>
<dbReference type="SMR" id="P07213"/>
<dbReference type="BioGRID" id="35706">
    <property type="interactions" value="404"/>
</dbReference>
<dbReference type="ComplexPortal" id="CPX-474">
    <property type="entry name" value="TOM40 mitochondrial outer membrane translocase holocomplex"/>
</dbReference>
<dbReference type="DIP" id="DIP-2301N"/>
<dbReference type="FunCoup" id="P07213">
    <property type="interactions" value="826"/>
</dbReference>
<dbReference type="IntAct" id="P07213">
    <property type="interactions" value="25"/>
</dbReference>
<dbReference type="MINT" id="P07213"/>
<dbReference type="STRING" id="4932.YNL121C"/>
<dbReference type="TCDB" id="3.A.8.1.1">
    <property type="family name" value="the mitochondrial protein translocase (mpt) family"/>
</dbReference>
<dbReference type="iPTMnet" id="P07213"/>
<dbReference type="PaxDb" id="4932-YNL121C"/>
<dbReference type="PeptideAtlas" id="P07213"/>
<dbReference type="EnsemblFungi" id="YNL121C_mRNA">
    <property type="protein sequence ID" value="YNL121C"/>
    <property type="gene ID" value="YNL121C"/>
</dbReference>
<dbReference type="GeneID" id="855602"/>
<dbReference type="KEGG" id="sce:YNL121C"/>
<dbReference type="AGR" id="SGD:S000005065"/>
<dbReference type="SGD" id="S000005065">
    <property type="gene designation" value="TOM70"/>
</dbReference>
<dbReference type="VEuPathDB" id="FungiDB:YNL121C"/>
<dbReference type="eggNOG" id="KOG0547">
    <property type="taxonomic scope" value="Eukaryota"/>
</dbReference>
<dbReference type="GeneTree" id="ENSGT00940000176538"/>
<dbReference type="HOGENOM" id="CLU_017516_1_0_1"/>
<dbReference type="InParanoid" id="P07213"/>
<dbReference type="OMA" id="QWRGDIE"/>
<dbReference type="OrthoDB" id="2942533at2759"/>
<dbReference type="BioCyc" id="YEAST:G3O-33142-MONOMER"/>
<dbReference type="BioGRID-ORCS" id="855602">
    <property type="hits" value="0 hits in 10 CRISPR screens"/>
</dbReference>
<dbReference type="EvolutionaryTrace" id="P07213"/>
<dbReference type="PRO" id="PR:P07213"/>
<dbReference type="Proteomes" id="UP000002311">
    <property type="component" value="Chromosome XIV"/>
</dbReference>
<dbReference type="RNAct" id="P07213">
    <property type="molecule type" value="protein"/>
</dbReference>
<dbReference type="GO" id="GO:0044233">
    <property type="term" value="C:mitochondria-associated endoplasmic reticulum membrane contact site"/>
    <property type="evidence" value="ECO:0000314"/>
    <property type="project" value="SGD"/>
</dbReference>
<dbReference type="GO" id="GO:0005741">
    <property type="term" value="C:mitochondrial outer membrane"/>
    <property type="evidence" value="ECO:0000314"/>
    <property type="project" value="SGD"/>
</dbReference>
<dbReference type="GO" id="GO:0005742">
    <property type="term" value="C:mitochondrial outer membrane translocase complex"/>
    <property type="evidence" value="ECO:0000314"/>
    <property type="project" value="SGD"/>
</dbReference>
<dbReference type="GO" id="GO:0005739">
    <property type="term" value="C:mitochondrion"/>
    <property type="evidence" value="ECO:0000314"/>
    <property type="project" value="SGD"/>
</dbReference>
<dbReference type="GO" id="GO:0030943">
    <property type="term" value="F:mitochondrion targeting sequence binding"/>
    <property type="evidence" value="ECO:0000315"/>
    <property type="project" value="SGD"/>
</dbReference>
<dbReference type="GO" id="GO:0015450">
    <property type="term" value="F:protein-transporting ATPase activity"/>
    <property type="evidence" value="ECO:0007669"/>
    <property type="project" value="InterPro"/>
</dbReference>
<dbReference type="GO" id="GO:0030150">
    <property type="term" value="P:protein import into mitochondrial matrix"/>
    <property type="evidence" value="ECO:0000315"/>
    <property type="project" value="SGD"/>
</dbReference>
<dbReference type="GO" id="GO:0045039">
    <property type="term" value="P:protein insertion into mitochondrial inner membrane"/>
    <property type="evidence" value="ECO:0000314"/>
    <property type="project" value="SGD"/>
</dbReference>
<dbReference type="GO" id="GO:0045040">
    <property type="term" value="P:protein insertion into mitochondrial outer membrane"/>
    <property type="evidence" value="ECO:0000314"/>
    <property type="project" value="ComplexPortal"/>
</dbReference>
<dbReference type="GO" id="GO:0006626">
    <property type="term" value="P:protein targeting to mitochondrion"/>
    <property type="evidence" value="ECO:0000316"/>
    <property type="project" value="SGD"/>
</dbReference>
<dbReference type="FunFam" id="1.25.40.10:FF:000357">
    <property type="entry name" value="Mitochondrial proteins import receptor"/>
    <property type="match status" value="1"/>
</dbReference>
<dbReference type="FunFam" id="1.25.40.10:FF:000374">
    <property type="entry name" value="Mitochondrial proteins import receptor"/>
    <property type="match status" value="1"/>
</dbReference>
<dbReference type="Gene3D" id="1.25.40.10">
    <property type="entry name" value="Tetratricopeptide repeat domain"/>
    <property type="match status" value="2"/>
</dbReference>
<dbReference type="InterPro" id="IPR005687">
    <property type="entry name" value="Tom70"/>
</dbReference>
<dbReference type="InterPro" id="IPR011990">
    <property type="entry name" value="TPR-like_helical_dom_sf"/>
</dbReference>
<dbReference type="InterPro" id="IPR019734">
    <property type="entry name" value="TPR_rpt"/>
</dbReference>
<dbReference type="NCBIfam" id="TIGR00990">
    <property type="entry name" value="3a0801s09"/>
    <property type="match status" value="1"/>
</dbReference>
<dbReference type="PANTHER" id="PTHR46208">
    <property type="entry name" value="MITOCHONDRIAL IMPORT RECEPTOR SUBUNIT TOM70"/>
    <property type="match status" value="1"/>
</dbReference>
<dbReference type="PANTHER" id="PTHR46208:SF1">
    <property type="entry name" value="MITOCHONDRIAL IMPORT RECEPTOR SUBUNIT TOM70"/>
    <property type="match status" value="1"/>
</dbReference>
<dbReference type="Pfam" id="PF00515">
    <property type="entry name" value="TPR_1"/>
    <property type="match status" value="1"/>
</dbReference>
<dbReference type="Pfam" id="PF13432">
    <property type="entry name" value="TPR_16"/>
    <property type="match status" value="1"/>
</dbReference>
<dbReference type="Pfam" id="PF14559">
    <property type="entry name" value="TPR_19"/>
    <property type="match status" value="1"/>
</dbReference>
<dbReference type="Pfam" id="PF13181">
    <property type="entry name" value="TPR_8"/>
    <property type="match status" value="1"/>
</dbReference>
<dbReference type="SMART" id="SM00028">
    <property type="entry name" value="TPR"/>
    <property type="match status" value="8"/>
</dbReference>
<dbReference type="SUPFAM" id="SSF48452">
    <property type="entry name" value="TPR-like"/>
    <property type="match status" value="2"/>
</dbReference>
<dbReference type="PROSITE" id="PS50005">
    <property type="entry name" value="TPR"/>
    <property type="match status" value="6"/>
</dbReference>
<dbReference type="PROSITE" id="PS50293">
    <property type="entry name" value="TPR_REGION"/>
    <property type="match status" value="2"/>
</dbReference>
<feature type="chain" id="PRO_0000106340" description="Mitochondrial import receptor subunit TOM70">
    <location>
        <begin position="1"/>
        <end position="617"/>
    </location>
</feature>
<feature type="topological domain" description="Mitochondrial intermembrane" evidence="1">
    <location>
        <begin position="1"/>
        <end position="10"/>
    </location>
</feature>
<feature type="transmembrane region" description="Helical" evidence="1">
    <location>
        <begin position="11"/>
        <end position="30"/>
    </location>
</feature>
<feature type="topological domain" description="Cytoplasmic" evidence="1">
    <location>
        <begin position="31"/>
        <end position="617"/>
    </location>
</feature>
<feature type="repeat" description="TPR 1">
    <location>
        <begin position="99"/>
        <end position="132"/>
    </location>
</feature>
<feature type="repeat" description="TPR 2">
    <location>
        <begin position="134"/>
        <end position="165"/>
    </location>
</feature>
<feature type="repeat" description="TPR 3">
    <location>
        <begin position="281"/>
        <end position="315"/>
    </location>
</feature>
<feature type="repeat" description="TPR 4">
    <location>
        <begin position="363"/>
        <end position="396"/>
    </location>
</feature>
<feature type="repeat" description="TPR 5">
    <location>
        <begin position="397"/>
        <end position="430"/>
    </location>
</feature>
<feature type="repeat" description="TPR 6">
    <location>
        <begin position="432"/>
        <end position="464"/>
    </location>
</feature>
<feature type="repeat" description="TPR 7">
    <location>
        <begin position="465"/>
        <end position="498"/>
    </location>
</feature>
<feature type="repeat" description="TPR 8">
    <location>
        <begin position="505"/>
        <end position="541"/>
    </location>
</feature>
<feature type="repeat" description="TPR 9">
    <location>
        <begin position="542"/>
        <end position="575"/>
    </location>
</feature>
<feature type="region of interest" description="Disordered" evidence="2">
    <location>
        <begin position="36"/>
        <end position="87"/>
    </location>
</feature>
<feature type="region of interest" description="Disordered" evidence="2">
    <location>
        <begin position="228"/>
        <end position="251"/>
    </location>
</feature>
<feature type="compositionally biased region" description="Basic and acidic residues" evidence="2">
    <location>
        <begin position="44"/>
        <end position="63"/>
    </location>
</feature>
<feature type="compositionally biased region" description="Polar residues" evidence="2">
    <location>
        <begin position="229"/>
        <end position="240"/>
    </location>
</feature>
<feature type="modified residue" description="Phosphoserine" evidence="10">
    <location>
        <position position="174"/>
    </location>
</feature>
<feature type="sequence variant" description="In strain: SK1, V1-09, YJM339 and YJM627." evidence="7">
    <original>N</original>
    <variation>S</variation>
    <location>
        <position position="30"/>
    </location>
</feature>
<feature type="sequence variant" description="In strain: V1-09 and YJM627." evidence="7">
    <original>P</original>
    <variation>S</variation>
    <location>
        <position position="68"/>
    </location>
</feature>
<feature type="sequence variant" description="In strain: YJM1129." evidence="7">
    <original>N</original>
    <variation>H</variation>
    <location>
        <position position="277"/>
    </location>
</feature>
<feature type="sequence variant" description="In strain: SK1." evidence="7">
    <original>L</original>
    <variation>S</variation>
    <location>
        <position position="359"/>
    </location>
</feature>
<feature type="sequence variant" description="In strain: YJM269 and YJM270." evidence="7">
    <original>N</original>
    <variation>I</variation>
    <location>
        <position position="364"/>
    </location>
</feature>
<feature type="sequence variant" description="In strain: YJM1129." evidence="7">
    <original>Y</original>
    <variation>H</variation>
    <location>
        <position position="385"/>
    </location>
</feature>
<feature type="sequence variant" description="In strain: V1-09." evidence="7">
    <original>E</original>
    <variation>G</variation>
    <location>
        <position position="429"/>
    </location>
</feature>
<feature type="sequence conflict" description="In Ref. 1; CAA29085." evidence="9" ref="1">
    <original>A</original>
    <variation>R</variation>
    <location>
        <position position="185"/>
    </location>
</feature>
<feature type="helix" evidence="11">
    <location>
        <begin position="95"/>
        <end position="111"/>
    </location>
</feature>
<feature type="helix" evidence="11">
    <location>
        <begin position="115"/>
        <end position="128"/>
    </location>
</feature>
<feature type="helix" evidence="11">
    <location>
        <begin position="132"/>
        <end position="145"/>
    </location>
</feature>
<feature type="helix" evidence="11">
    <location>
        <begin position="148"/>
        <end position="161"/>
    </location>
</feature>
<feature type="helix" evidence="11">
    <location>
        <begin position="166"/>
        <end position="178"/>
    </location>
</feature>
<feature type="helix" evidence="11">
    <location>
        <begin position="182"/>
        <end position="194"/>
    </location>
</feature>
<feature type="strand" evidence="11">
    <location>
        <begin position="195"/>
        <end position="197"/>
    </location>
</feature>
<feature type="helix" evidence="11">
    <location>
        <begin position="200"/>
        <end position="202"/>
    </location>
</feature>
<feature type="helix" evidence="11">
    <location>
        <begin position="204"/>
        <end position="219"/>
    </location>
</feature>
<feature type="helix" evidence="11">
    <location>
        <begin position="254"/>
        <end position="261"/>
    </location>
</feature>
<feature type="helix" evidence="11">
    <location>
        <begin position="278"/>
        <end position="290"/>
    </location>
</feature>
<feature type="helix" evidence="11">
    <location>
        <begin position="297"/>
        <end position="315"/>
    </location>
</feature>
<feature type="turn" evidence="11">
    <location>
        <begin position="316"/>
        <end position="318"/>
    </location>
</feature>
<feature type="helix" evidence="11">
    <location>
        <begin position="323"/>
        <end position="342"/>
    </location>
</feature>
<feature type="helix" evidence="11">
    <location>
        <begin position="346"/>
        <end position="359"/>
    </location>
</feature>
<feature type="helix" evidence="11">
    <location>
        <begin position="363"/>
        <end position="374"/>
    </location>
</feature>
<feature type="helix" evidence="11">
    <location>
        <begin position="382"/>
        <end position="384"/>
    </location>
</feature>
<feature type="helix" evidence="11">
    <location>
        <begin position="385"/>
        <end position="390"/>
    </location>
</feature>
<feature type="helix" evidence="11">
    <location>
        <begin position="398"/>
        <end position="409"/>
    </location>
</feature>
<feature type="helix" evidence="11">
    <location>
        <begin position="415"/>
        <end position="425"/>
    </location>
</feature>
<feature type="helix" evidence="11">
    <location>
        <begin position="432"/>
        <end position="440"/>
    </location>
</feature>
<feature type="turn" evidence="11">
    <location>
        <begin position="441"/>
        <end position="445"/>
    </location>
</feature>
<feature type="helix" evidence="11">
    <location>
        <begin position="447"/>
        <end position="460"/>
    </location>
</feature>
<feature type="helix" evidence="11">
    <location>
        <begin position="466"/>
        <end position="477"/>
    </location>
</feature>
<feature type="helix" evidence="11">
    <location>
        <begin position="481"/>
        <end position="496"/>
    </location>
</feature>
<feature type="strand" evidence="11">
    <location>
        <begin position="498"/>
        <end position="500"/>
    </location>
</feature>
<feature type="helix" evidence="11">
    <location>
        <begin position="506"/>
        <end position="516"/>
    </location>
</feature>
<feature type="helix" evidence="11">
    <location>
        <begin position="523"/>
        <end position="537"/>
    </location>
</feature>
<feature type="helix" evidence="11">
    <location>
        <begin position="542"/>
        <end position="554"/>
    </location>
</feature>
<feature type="helix" evidence="11">
    <location>
        <begin position="558"/>
        <end position="571"/>
    </location>
</feature>
<feature type="helix" evidence="11">
    <location>
        <begin position="575"/>
        <end position="594"/>
    </location>
</feature>
<feature type="helix" evidence="11">
    <location>
        <begin position="598"/>
        <end position="605"/>
    </location>
</feature>
<sequence>MKSFITRNKTAILATVAATGTAIGAYYYYNQLQQQQQRGKKNTINKDEKKDTKDSQKETEGAKKSTAPSNPPIYPVSSNGEPDFSNKANFTAEEKDKYALALKDKGNQFFRNKKYDDAIKYYNWALELKEDPVFYSNLSACYVSVGDLKKVVEMSTKALELKPDYSKVLLRRASANEGLGKFADAMFDLSVLSLNGDFNDASIEPMLERNLNKQAMSKLKEKFGDIDTATATPTELSTQPAKERKDKQENLPSVTSMASFFGIFKPELTFANYDESNEADKELMNGLSNLYKRSPESYDKADESFTKAARLFEEQLDKNNEDEKLKEKLAISLEHTGIFKFLKNDPLGAHEDIKKAIELFPRVNSYIYMALIMADRNDSTEYYNYFDKALKLDSNNSSVYYHRGQMNFILQNYDQAGKDFDKAKELDPENIFPYIQLACLAYRENKFDDCETLFSEAKRKFPEAPEVPNFFAEILTDKNDFDKALKQYDLAIELENKLDGIYVGIAPLVGKATLLTRNPTVENFIEATNLLEKASKLDPRSEQAKIGLAQMKLQQEDIDEAITLFEESADLARTMEEKLQAITFAEAAKVQQRIRSDPVLAKKIQETLAKLREQGLM</sequence>
<reference key="1">
    <citation type="journal article" date="1983" name="EMBO J.">
        <title>Import of proteins into mitochondria: nucleotide sequence of the gene for a 70-kd protein of the yeast mitochondrial outer membrane.</title>
        <authorList>
            <person name="Hase T."/>
            <person name="Riezman H."/>
            <person name="Suda K."/>
            <person name="Schatz G."/>
        </authorList>
    </citation>
    <scope>NUCLEOTIDE SEQUENCE [GENOMIC DNA]</scope>
</reference>
<reference key="2">
    <citation type="journal article" date="2008" name="Genetics">
        <title>Sequential elimination of major-effect contributors identifies additional quantitative trait loci conditioning high-temperature growth in yeast.</title>
        <authorList>
            <person name="Sinha H."/>
            <person name="David L."/>
            <person name="Pascon R.C."/>
            <person name="Clauder-Muenster S."/>
            <person name="Krishnakumar S."/>
            <person name="Nguyen M."/>
            <person name="Shi G."/>
            <person name="Dean J."/>
            <person name="Davis R.W."/>
            <person name="Oefner P.J."/>
            <person name="McCusker J.H."/>
            <person name="Steinmetz L.M."/>
        </authorList>
    </citation>
    <scope>NUCLEOTIDE SEQUENCE [GENOMIC DNA]</scope>
    <scope>VARIANTS SER-30; SER-68; HIS-277; SER-359; ILE-364; HIS-385 AND GLY-429</scope>
    <source>
        <strain>ATCC 200060 / W303</strain>
        <strain>S103</strain>
        <strain>SK1</strain>
        <strain>V1-09</strain>
        <strain>YJM 1129</strain>
        <strain>YJM 269</strain>
        <strain>YJM 270</strain>
        <strain>YJM 320</strain>
        <strain>YJM 326</strain>
        <strain>YJM 339</strain>
        <strain>YJM 627</strain>
        <strain>YJM230</strain>
    </source>
</reference>
<reference key="3">
    <citation type="journal article" date="1997" name="Yeast">
        <title>The DNA sequence of cosmid 14-13b from chromosome XIV of Saccharomyces cerevisiae reveals an unusually high number of overlapping open reading frames.</title>
        <authorList>
            <person name="de Antoni A."/>
            <person name="D'Angelo M."/>
            <person name="Dal Pero F."/>
            <person name="Sartorello F."/>
            <person name="Pandolfo D."/>
            <person name="Pallavicini A."/>
            <person name="Lanfranchi G."/>
            <person name="Valle G."/>
        </authorList>
    </citation>
    <scope>NUCLEOTIDE SEQUENCE [GENOMIC DNA]</scope>
</reference>
<reference key="4">
    <citation type="journal article" date="1997" name="Nature">
        <title>The nucleotide sequence of Saccharomyces cerevisiae chromosome XIV and its evolutionary implications.</title>
        <authorList>
            <person name="Philippsen P."/>
            <person name="Kleine K."/>
            <person name="Poehlmann R."/>
            <person name="Duesterhoeft A."/>
            <person name="Hamberg K."/>
            <person name="Hegemann J.H."/>
            <person name="Obermaier B."/>
            <person name="Urrestarazu L.A."/>
            <person name="Aert R."/>
            <person name="Albermann K."/>
            <person name="Altmann R."/>
            <person name="Andre B."/>
            <person name="Baladron V."/>
            <person name="Ballesta J.P.G."/>
            <person name="Becam A.-M."/>
            <person name="Beinhauer J.D."/>
            <person name="Boskovic J."/>
            <person name="Buitrago M.J."/>
            <person name="Bussereau F."/>
            <person name="Coster F."/>
            <person name="Crouzet M."/>
            <person name="D'Angelo M."/>
            <person name="Dal Pero F."/>
            <person name="De Antoni A."/>
            <person name="del Rey F."/>
            <person name="Doignon F."/>
            <person name="Domdey H."/>
            <person name="Dubois E."/>
            <person name="Fiedler T.A."/>
            <person name="Fleig U."/>
            <person name="Floeth M."/>
            <person name="Fritz C."/>
            <person name="Gaillardin C."/>
            <person name="Garcia-Cantalejo J.M."/>
            <person name="Glansdorff N."/>
            <person name="Goffeau A."/>
            <person name="Gueldener U."/>
            <person name="Herbert C.J."/>
            <person name="Heumann K."/>
            <person name="Heuss-Neitzel D."/>
            <person name="Hilbert H."/>
            <person name="Hinni K."/>
            <person name="Iraqui Houssaini I."/>
            <person name="Jacquet M."/>
            <person name="Jimenez A."/>
            <person name="Jonniaux J.-L."/>
            <person name="Karpfinger-Hartl L."/>
            <person name="Lanfranchi G."/>
            <person name="Lepingle A."/>
            <person name="Levesque H."/>
            <person name="Lyck R."/>
            <person name="Maftahi M."/>
            <person name="Mallet L."/>
            <person name="Maurer C.T.C."/>
            <person name="Messenguy F."/>
            <person name="Mewes H.-W."/>
            <person name="Moestl D."/>
            <person name="Nasr F."/>
            <person name="Nicaud J.-M."/>
            <person name="Niedenthal R.K."/>
            <person name="Pandolfo D."/>
            <person name="Pierard A."/>
            <person name="Piravandi E."/>
            <person name="Planta R.J."/>
            <person name="Pohl T.M."/>
            <person name="Purnelle B."/>
            <person name="Rebischung C."/>
            <person name="Remacha M.A."/>
            <person name="Revuelta J.L."/>
            <person name="Rinke M."/>
            <person name="Saiz J.E."/>
            <person name="Sartorello F."/>
            <person name="Scherens B."/>
            <person name="Sen-Gupta M."/>
            <person name="Soler-Mira A."/>
            <person name="Urbanus J.H.M."/>
            <person name="Valle G."/>
            <person name="Van Dyck L."/>
            <person name="Verhasselt P."/>
            <person name="Vierendeels F."/>
            <person name="Vissers S."/>
            <person name="Voet M."/>
            <person name="Volckaert G."/>
            <person name="Wach A."/>
            <person name="Wambutt R."/>
            <person name="Wedler H."/>
            <person name="Zollner A."/>
            <person name="Hani J."/>
        </authorList>
    </citation>
    <scope>NUCLEOTIDE SEQUENCE [LARGE SCALE GENOMIC DNA]</scope>
    <source>
        <strain>ATCC 204508 / S288c</strain>
    </source>
</reference>
<reference key="5">
    <citation type="journal article" date="2014" name="G3 (Bethesda)">
        <title>The reference genome sequence of Saccharomyces cerevisiae: Then and now.</title>
        <authorList>
            <person name="Engel S.R."/>
            <person name="Dietrich F.S."/>
            <person name="Fisk D.G."/>
            <person name="Binkley G."/>
            <person name="Balakrishnan R."/>
            <person name="Costanzo M.C."/>
            <person name="Dwight S.S."/>
            <person name="Hitz B.C."/>
            <person name="Karra K."/>
            <person name="Nash R.S."/>
            <person name="Weng S."/>
            <person name="Wong E.D."/>
            <person name="Lloyd P."/>
            <person name="Skrzypek M.S."/>
            <person name="Miyasato S.R."/>
            <person name="Simison M."/>
            <person name="Cherry J.M."/>
        </authorList>
    </citation>
    <scope>GENOME REANNOTATION</scope>
    <source>
        <strain>ATCC 204508 / S288c</strain>
    </source>
</reference>
<reference key="6">
    <citation type="journal article" date="1990" name="Nature">
        <title>Expanding family.</title>
        <authorList>
            <person name="Boguski M.S."/>
            <person name="Sikorski R.S."/>
            <person name="Hieter P.A."/>
            <person name="Goebl M."/>
        </authorList>
    </citation>
    <scope>DOMAINS TPR REPEATS</scope>
</reference>
<reference key="7">
    <citation type="journal article" date="1990" name="EMBO J.">
        <title>Protein import into yeast mitochondria is accelerated by the outer membrane protein MAS70.</title>
        <authorList>
            <person name="Hines V."/>
            <person name="Brandt A."/>
            <person name="Griffiths G."/>
            <person name="Horstmann H."/>
            <person name="Brutsch H."/>
            <person name="Schatz G."/>
        </authorList>
    </citation>
    <scope>CHARACTERIZATION</scope>
</reference>
<reference key="8">
    <citation type="journal article" date="1993" name="J. Biol. Chem.">
        <title>Precursor binding to yeast mitochondria. A general role for the outer membrane protein Mas70p.</title>
        <authorList>
            <person name="Hines V."/>
            <person name="Schatz G."/>
        </authorList>
    </citation>
    <scope>CHARACTERIZATION</scope>
</reference>
<reference key="9">
    <citation type="journal article" date="1998" name="Mol. Cell. Biol.">
        <title>Preprotein translocase of the outer mitochondrial membrane: molecular dissection and assembly of the general import pore complex.</title>
        <authorList>
            <person name="Dekker P.J.T."/>
            <person name="Ryan M.T."/>
            <person name="Brix J."/>
            <person name="Mueller H."/>
            <person name="Hoenlinger A."/>
            <person name="Pfanner N."/>
        </authorList>
    </citation>
    <scope>IDENTIFICATION IN THE TOM COMPLEX</scope>
</reference>
<reference key="10">
    <citation type="journal article" date="1999" name="Nature">
        <title>Tom22 is a multifunctional organizer of the mitochondrial preprotein translocase.</title>
        <authorList>
            <person name="van Wilpe S."/>
            <person name="Ryan M.T."/>
            <person name="Hill K."/>
            <person name="Maarse A.C."/>
            <person name="Meisinger C."/>
            <person name="Brix J."/>
            <person name="Dekker P.J.T."/>
            <person name="Moczko M."/>
            <person name="Wagner R."/>
            <person name="Meijer M."/>
            <person name="Guiard B."/>
            <person name="Hoenlinger A."/>
            <person name="Pfanner N."/>
        </authorList>
    </citation>
    <scope>INTERACTION WITH TOM22</scope>
</reference>
<reference key="11">
    <citation type="journal article" date="2000" name="J. Mol. Biol.">
        <title>The mitochondrial import receptor Tom70: identification of a 25 kDa core domain with a specific binding site for preproteins.</title>
        <authorList>
            <person name="Brix J."/>
            <person name="Ziegler G.A."/>
            <person name="Dietmeier K."/>
            <person name="Schneider-Mergener J."/>
            <person name="Schulz G.E."/>
            <person name="Pfanner N."/>
        </authorList>
    </citation>
    <scope>FUNCTION</scope>
</reference>
<reference key="12">
    <citation type="journal article" date="2001" name="Biochemistry">
        <title>Yeast mitochondrial dehydrogenases are associated in a supramolecular complex.</title>
        <authorList>
            <person name="Grandier-Vazeille X."/>
            <person name="Bathany K."/>
            <person name="Chaignepain S."/>
            <person name="Camougrand N."/>
            <person name="Manon S."/>
            <person name="Schmitter J.-M."/>
        </authorList>
    </citation>
    <scope>SUBCELLULAR LOCATION</scope>
</reference>
<reference key="13">
    <citation type="journal article" date="2003" name="Nature">
        <title>Global analysis of protein expression in yeast.</title>
        <authorList>
            <person name="Ghaemmaghami S."/>
            <person name="Huh W.-K."/>
            <person name="Bower K."/>
            <person name="Howson R.W."/>
            <person name="Belle A."/>
            <person name="Dephoure N."/>
            <person name="O'Shea E.K."/>
            <person name="Weissman J.S."/>
        </authorList>
    </citation>
    <scope>LEVEL OF PROTEIN EXPRESSION [LARGE SCALE ANALYSIS]</scope>
</reference>
<reference key="14">
    <citation type="journal article" date="2007" name="J. Proteome Res.">
        <title>Large-scale phosphorylation analysis of alpha-factor-arrested Saccharomyces cerevisiae.</title>
        <authorList>
            <person name="Li X."/>
            <person name="Gerber S.A."/>
            <person name="Rudner A.D."/>
            <person name="Beausoleil S.A."/>
            <person name="Haas W."/>
            <person name="Villen J."/>
            <person name="Elias J.E."/>
            <person name="Gygi S.P."/>
        </authorList>
    </citation>
    <scope>IDENTIFICATION BY MASS SPECTROMETRY [LARGE SCALE ANALYSIS]</scope>
    <source>
        <strain>ADR376</strain>
    </source>
</reference>
<reference key="15">
    <citation type="journal article" date="2007" name="Proc. Natl. Acad. Sci. U.S.A.">
        <title>Analysis of phosphorylation sites on proteins from Saccharomyces cerevisiae by electron transfer dissociation (ETD) mass spectrometry.</title>
        <authorList>
            <person name="Chi A."/>
            <person name="Huttenhower C."/>
            <person name="Geer L.Y."/>
            <person name="Coon J.J."/>
            <person name="Syka J.E.P."/>
            <person name="Bai D.L."/>
            <person name="Shabanowitz J."/>
            <person name="Burke D.J."/>
            <person name="Troyanskaya O.G."/>
            <person name="Hunt D.F."/>
        </authorList>
    </citation>
    <scope>PHOSPHORYLATION [LARGE SCALE ANALYSIS] AT SER-174</scope>
    <scope>IDENTIFICATION BY MASS SPECTROMETRY [LARGE SCALE ANALYSIS]</scope>
</reference>
<reference key="16">
    <citation type="journal article" date="2008" name="Mol. Cell. Proteomics">
        <title>A multidimensional chromatography technology for in-depth phosphoproteome analysis.</title>
        <authorList>
            <person name="Albuquerque C.P."/>
            <person name="Smolka M.B."/>
            <person name="Payne S.H."/>
            <person name="Bafna V."/>
            <person name="Eng J."/>
            <person name="Zhou H."/>
        </authorList>
    </citation>
    <scope>IDENTIFICATION BY MASS SPECTROMETRY [LARGE SCALE ANALYSIS]</scope>
</reference>
<reference key="17">
    <citation type="journal article" date="2009" name="Science">
        <title>Global analysis of Cdk1 substrate phosphorylation sites provides insights into evolution.</title>
        <authorList>
            <person name="Holt L.J."/>
            <person name="Tuch B.B."/>
            <person name="Villen J."/>
            <person name="Johnson A.D."/>
            <person name="Gygi S.P."/>
            <person name="Morgan D.O."/>
        </authorList>
    </citation>
    <scope>IDENTIFICATION BY MASS SPECTROMETRY [LARGE SCALE ANALYSIS]</scope>
</reference>
<reference key="18">
    <citation type="journal article" date="2012" name="Proc. Natl. Acad. Sci. U.S.A.">
        <title>N-terminal acetylome analyses and functional insights of the N-terminal acetyltransferase NatB.</title>
        <authorList>
            <person name="Van Damme P."/>
            <person name="Lasa M."/>
            <person name="Polevoda B."/>
            <person name="Gazquez C."/>
            <person name="Elosegui-Artola A."/>
            <person name="Kim D.S."/>
            <person name="De Juan-Pardo E."/>
            <person name="Demeyer K."/>
            <person name="Hole K."/>
            <person name="Larrea E."/>
            <person name="Timmerman E."/>
            <person name="Prieto J."/>
            <person name="Arnesen T."/>
            <person name="Sherman F."/>
            <person name="Gevaert K."/>
            <person name="Aldabe R."/>
        </authorList>
    </citation>
    <scope>IDENTIFICATION BY MASS SPECTROMETRY [LARGE SCALE ANALYSIS]</scope>
</reference>
<protein>
    <recommendedName>
        <fullName>Mitochondrial import receptor subunit TOM70</fullName>
    </recommendedName>
    <alternativeName>
        <fullName>70 kDa mitochondrial outer membrane protein</fullName>
    </alternativeName>
    <alternativeName>
        <fullName>Translocase of outer membrane 70 kDa subunit</fullName>
    </alternativeName>
</protein>
<proteinExistence type="evidence at protein level"/>
<name>TOM70_YEAST</name>
<accession>P07213</accession>
<accession>B0KZR5</accession>
<accession>B0KZS4</accession>
<accession>B0KZU2</accession>
<accession>B0KZY7</accession>
<accession>B0KZZ6</accession>
<accession>B0L005</accession>
<accession>B0L023</accession>
<accession>D6W162</accession>
<evidence type="ECO:0000255" key="1"/>
<evidence type="ECO:0000256" key="2">
    <source>
        <dbReference type="SAM" id="MobiDB-lite"/>
    </source>
</evidence>
<evidence type="ECO:0000269" key="3">
    <source>
    </source>
</evidence>
<evidence type="ECO:0000269" key="4">
    <source>
    </source>
</evidence>
<evidence type="ECO:0000269" key="5">
    <source>
    </source>
</evidence>
<evidence type="ECO:0000269" key="6">
    <source>
    </source>
</evidence>
<evidence type="ECO:0000269" key="7">
    <source>
    </source>
</evidence>
<evidence type="ECO:0000269" key="8">
    <source>
    </source>
</evidence>
<evidence type="ECO:0000305" key="9"/>
<evidence type="ECO:0007744" key="10">
    <source>
    </source>
</evidence>
<evidence type="ECO:0007829" key="11">
    <source>
        <dbReference type="PDB" id="2GW1"/>
    </source>
</evidence>
<comment type="function">
    <text evidence="4">Component of the TOM (translocase of outer membrane) receptor complex responsible for the recognition and translocation of cytosolically synthesized mitochondrial preproteins. Together with TOM20 and TOM22 functions as the transit peptide receptor at the surface of the mitochondrion outer membrane and facilitates the movement of preproteins into the TOM40 translocation pore.</text>
</comment>
<comment type="subunit">
    <text evidence="3 8">Forms part of the TOM (translocase of outer membrane) complex that consists of at least 7 different proteins (TOM5, TOM6, TOM7, TOM20, TOM22, TOM40 and TOM70). In the complex interacts with TOM22. Interacts with TOM37.</text>
</comment>
<comment type="interaction">
    <interactant intactId="EBI-12551">
        <id>P07213</id>
    </interactant>
    <interactant intactId="EBI-516580">
        <id>Q07812</id>
        <label>BAX</label>
    </interactant>
    <organismsDiffer>true</organismsDiffer>
    <experiments>2</experiments>
</comment>
<comment type="subcellular location">
    <subcellularLocation>
        <location evidence="5">Mitochondrion outer membrane</location>
        <topology evidence="5">Single-pass membrane protein</topology>
    </subcellularLocation>
</comment>
<comment type="miscellaneous">
    <text evidence="6">Present with 45300 molecules/cell in log phase SD medium.</text>
</comment>
<comment type="similarity">
    <text evidence="9">Belongs to the Tom70 family.</text>
</comment>
<gene>
    <name type="primary">TOM70</name>
    <name type="synonym">MAS70</name>
    <name type="synonym">OMP1</name>
    <name type="ordered locus">YNL121C</name>
    <name type="ORF">N1905</name>
</gene>
<keyword id="KW-0002">3D-structure</keyword>
<keyword id="KW-0472">Membrane</keyword>
<keyword id="KW-0496">Mitochondrion</keyword>
<keyword id="KW-1000">Mitochondrion outer membrane</keyword>
<keyword id="KW-0597">Phosphoprotein</keyword>
<keyword id="KW-1185">Reference proteome</keyword>
<keyword id="KW-0677">Repeat</keyword>
<keyword id="KW-0802">TPR repeat</keyword>
<keyword id="KW-0812">Transmembrane</keyword>
<keyword id="KW-1133">Transmembrane helix</keyword>
<organism>
    <name type="scientific">Saccharomyces cerevisiae (strain ATCC 204508 / S288c)</name>
    <name type="common">Baker's yeast</name>
    <dbReference type="NCBI Taxonomy" id="559292"/>
    <lineage>
        <taxon>Eukaryota</taxon>
        <taxon>Fungi</taxon>
        <taxon>Dikarya</taxon>
        <taxon>Ascomycota</taxon>
        <taxon>Saccharomycotina</taxon>
        <taxon>Saccharomycetes</taxon>
        <taxon>Saccharomycetales</taxon>
        <taxon>Saccharomycetaceae</taxon>
        <taxon>Saccharomyces</taxon>
    </lineage>
</organism>